<proteinExistence type="inferred from homology"/>
<reference key="1">
    <citation type="submission" date="2003-06" db="EMBL/GenBank/DDBJ databases">
        <title>The complete genome sequence of Haemophilus ducreyi.</title>
        <authorList>
            <person name="Munson R.S. Jr."/>
            <person name="Ray W.C."/>
            <person name="Mahairas G."/>
            <person name="Sabo P."/>
            <person name="Mungur R."/>
            <person name="Johnson L."/>
            <person name="Nguyen D."/>
            <person name="Wang J."/>
            <person name="Forst C."/>
            <person name="Hood L."/>
        </authorList>
    </citation>
    <scope>NUCLEOTIDE SEQUENCE [LARGE SCALE GENOMIC DNA]</scope>
    <source>
        <strain>35000HP / ATCC 700724</strain>
    </source>
</reference>
<evidence type="ECO:0000255" key="1">
    <source>
        <dbReference type="HAMAP-Rule" id="MF_01723"/>
    </source>
</evidence>
<name>THIQ_HAEDU</name>
<accession>Q7VP69</accession>
<comment type="function">
    <text evidence="1">Part of the ABC transporter complex ThiBPQ involved in thiamine import. Responsible for energy coupling to the transport system.</text>
</comment>
<comment type="catalytic activity">
    <reaction evidence="1">
        <text>thiamine(out) + ATP + H2O = thiamine(in) + ADP + phosphate + H(+)</text>
        <dbReference type="Rhea" id="RHEA:29811"/>
        <dbReference type="ChEBI" id="CHEBI:15377"/>
        <dbReference type="ChEBI" id="CHEBI:15378"/>
        <dbReference type="ChEBI" id="CHEBI:18385"/>
        <dbReference type="ChEBI" id="CHEBI:30616"/>
        <dbReference type="ChEBI" id="CHEBI:43474"/>
        <dbReference type="ChEBI" id="CHEBI:456216"/>
        <dbReference type="EC" id="7.6.2.15"/>
    </reaction>
</comment>
<comment type="subunit">
    <text evidence="1">The complex is composed of two ATP-binding proteins (ThiQ), two transmembrane proteins (ThiP) and a solute-binding protein (ThiB).</text>
</comment>
<comment type="subcellular location">
    <subcellularLocation>
        <location evidence="1">Cell inner membrane</location>
        <topology evidence="1">Peripheral membrane protein</topology>
    </subcellularLocation>
</comment>
<comment type="similarity">
    <text evidence="1">Belongs to the ABC transporter superfamily. Thiamine importer (TC 3.A.1.19.1) family.</text>
</comment>
<organism>
    <name type="scientific">Haemophilus ducreyi (strain 35000HP / ATCC 700724)</name>
    <dbReference type="NCBI Taxonomy" id="233412"/>
    <lineage>
        <taxon>Bacteria</taxon>
        <taxon>Pseudomonadati</taxon>
        <taxon>Pseudomonadota</taxon>
        <taxon>Gammaproteobacteria</taxon>
        <taxon>Pasteurellales</taxon>
        <taxon>Pasteurellaceae</taxon>
        <taxon>Haemophilus</taxon>
    </lineage>
</organism>
<sequence length="213" mass="23915">MIELNVTFDYEQMPMHFILQVAKAQRVAVVGESGAGKSTLLNLIAGFDLATSGQILLNEVDYTFAEVADRPVSMLFQENNVFPHLTVEQNIGLALVPRLHLTPQQQQAVKKIAGQMGIAELLLRRADQLSGGQKQRVALARTLLQDKPILLLDEPFSALDPIRRNELQQLVLEICRQRQLTLLMVTHQFSESEALFDRVIHIEQGRIVADQLL</sequence>
<dbReference type="EC" id="7.6.2.15" evidence="1"/>
<dbReference type="EMBL" id="AE017143">
    <property type="protein sequence ID" value="AAP95218.1"/>
    <property type="molecule type" value="Genomic_DNA"/>
</dbReference>
<dbReference type="RefSeq" id="WP_010944271.1">
    <property type="nucleotide sequence ID" value="NC_002940.2"/>
</dbReference>
<dbReference type="SMR" id="Q7VP69"/>
<dbReference type="STRING" id="233412.HD_0231"/>
<dbReference type="KEGG" id="hdu:HD_0231"/>
<dbReference type="eggNOG" id="COG3840">
    <property type="taxonomic scope" value="Bacteria"/>
</dbReference>
<dbReference type="HOGENOM" id="CLU_000604_1_22_6"/>
<dbReference type="OrthoDB" id="9802264at2"/>
<dbReference type="Proteomes" id="UP000001022">
    <property type="component" value="Chromosome"/>
</dbReference>
<dbReference type="GO" id="GO:0005886">
    <property type="term" value="C:plasma membrane"/>
    <property type="evidence" value="ECO:0007669"/>
    <property type="project" value="UniProtKB-SubCell"/>
</dbReference>
<dbReference type="GO" id="GO:0048502">
    <property type="term" value="F:ABC-type thiamine transporter activity"/>
    <property type="evidence" value="ECO:0007669"/>
    <property type="project" value="UniProtKB-EC"/>
</dbReference>
<dbReference type="GO" id="GO:0005524">
    <property type="term" value="F:ATP binding"/>
    <property type="evidence" value="ECO:0007669"/>
    <property type="project" value="UniProtKB-KW"/>
</dbReference>
<dbReference type="GO" id="GO:0016887">
    <property type="term" value="F:ATP hydrolysis activity"/>
    <property type="evidence" value="ECO:0007669"/>
    <property type="project" value="InterPro"/>
</dbReference>
<dbReference type="CDD" id="cd03298">
    <property type="entry name" value="ABC_ThiQ_thiamine_transporter"/>
    <property type="match status" value="1"/>
</dbReference>
<dbReference type="Gene3D" id="3.40.50.300">
    <property type="entry name" value="P-loop containing nucleotide triphosphate hydrolases"/>
    <property type="match status" value="1"/>
</dbReference>
<dbReference type="InterPro" id="IPR003593">
    <property type="entry name" value="AAA+_ATPase"/>
</dbReference>
<dbReference type="InterPro" id="IPR050093">
    <property type="entry name" value="ABC_SmlMolc_Importer"/>
</dbReference>
<dbReference type="InterPro" id="IPR003439">
    <property type="entry name" value="ABC_transporter-like_ATP-bd"/>
</dbReference>
<dbReference type="InterPro" id="IPR017871">
    <property type="entry name" value="ABC_transporter-like_CS"/>
</dbReference>
<dbReference type="InterPro" id="IPR027417">
    <property type="entry name" value="P-loop_NTPase"/>
</dbReference>
<dbReference type="InterPro" id="IPR005968">
    <property type="entry name" value="Thiamine_ABC_ThiQ"/>
</dbReference>
<dbReference type="NCBIfam" id="TIGR01277">
    <property type="entry name" value="thiQ"/>
    <property type="match status" value="1"/>
</dbReference>
<dbReference type="PANTHER" id="PTHR42781">
    <property type="entry name" value="SPERMIDINE/PUTRESCINE IMPORT ATP-BINDING PROTEIN POTA"/>
    <property type="match status" value="1"/>
</dbReference>
<dbReference type="PANTHER" id="PTHR42781:SF1">
    <property type="entry name" value="THIAMINE IMPORT ATP-BINDING PROTEIN THIQ"/>
    <property type="match status" value="1"/>
</dbReference>
<dbReference type="Pfam" id="PF00005">
    <property type="entry name" value="ABC_tran"/>
    <property type="match status" value="1"/>
</dbReference>
<dbReference type="SMART" id="SM00382">
    <property type="entry name" value="AAA"/>
    <property type="match status" value="1"/>
</dbReference>
<dbReference type="SUPFAM" id="SSF52540">
    <property type="entry name" value="P-loop containing nucleoside triphosphate hydrolases"/>
    <property type="match status" value="1"/>
</dbReference>
<dbReference type="PROSITE" id="PS00211">
    <property type="entry name" value="ABC_TRANSPORTER_1"/>
    <property type="match status" value="1"/>
</dbReference>
<dbReference type="PROSITE" id="PS50893">
    <property type="entry name" value="ABC_TRANSPORTER_2"/>
    <property type="match status" value="1"/>
</dbReference>
<dbReference type="PROSITE" id="PS51288">
    <property type="entry name" value="THIQ"/>
    <property type="match status" value="1"/>
</dbReference>
<feature type="chain" id="PRO_0000274442" description="Thiamine import ATP-binding protein ThiQ">
    <location>
        <begin position="1"/>
        <end position="213"/>
    </location>
</feature>
<feature type="domain" description="ABC transporter" evidence="1">
    <location>
        <begin position="1"/>
        <end position="212"/>
    </location>
</feature>
<feature type="binding site" evidence="1">
    <location>
        <begin position="31"/>
        <end position="38"/>
    </location>
    <ligand>
        <name>ATP</name>
        <dbReference type="ChEBI" id="CHEBI:30616"/>
    </ligand>
</feature>
<gene>
    <name evidence="1" type="primary">thiQ</name>
    <name type="ordered locus">HD_0231</name>
</gene>
<keyword id="KW-0067">ATP-binding</keyword>
<keyword id="KW-0997">Cell inner membrane</keyword>
<keyword id="KW-1003">Cell membrane</keyword>
<keyword id="KW-0472">Membrane</keyword>
<keyword id="KW-0547">Nucleotide-binding</keyword>
<keyword id="KW-1185">Reference proteome</keyword>
<keyword id="KW-1278">Translocase</keyword>
<keyword id="KW-0813">Transport</keyword>
<protein>
    <recommendedName>
        <fullName evidence="1">Thiamine import ATP-binding protein ThiQ</fullName>
        <ecNumber evidence="1">7.6.2.15</ecNumber>
    </recommendedName>
</protein>